<sequence>MGDLKSGFEEVDGVRLGYLIIKGKQMFALSQVFTDLLKNIPRTTVHKRMDHLKVKKHHCDLEELRKLKAINSIAFHAAKCTLISREDVEALYTSCKTERVLKTKRRRVGRALATKAPPPERAAAASPRPGFWKDKHQLWRGLSGAARPLPISAQSQRPGAAAARPAAHLPQIFSKYPGSHYPEIVRSPCKPPLNYETAPLQGNYVAFPSDPAYFRSLLCSKHPAAAAAAAAAAAAAAAAAAAAAYYQVSAAGPQPKAAAGAGGPGSLSYRCKRKRGGAKDCLLAPHAGARRLLLLPRSYKAKAAAAAAAAAAAAAAAAGATCLERFHLVNGFCPPPHHHHHHHHHHHHHHHRAQPPQQSHHPPHHHRPQPHLGSFPESCSSDSESSSYSDHAANDSDFGSSLSSSSNSVSSEEEEEEGEEEEEEEEEEGGSGASDSSEVSSEEEDSSTESDSSSGSSQVSVQSIRFRRTSFCKPPSVQAQANFLYHLASAAAATKPAAFEDAGRLPDLKSSVKAESPAEWNLQSWAPKASPVYCPASLGSCFAEIRNDRVSEITFPHSEISNAVKRTDLTINCLAEGASSPSPKTNNAFPQQRILREARKCLQTTPTTHCADNNTIAARFLNNDSSGAEANSEKYSKILHCPEFATDLPSSQTDPEVNAAGAAATKAENPCTDTGDKTLPFLHNIKIKVEDSSANEEYEPHLFTNKLKCECNDTKGEFYSVTESKEEDALLTTAKEGFACPEKETPSLNPLAQSQGLSCTLGSPKPEDGEYKFGARVRKNYRTLVLGKRPVLQTPPVKPNLKSARSPRPTGKTETNEGTLDDFTVINRRKKVASNVASAVKRPFHFMANFPCPPSLIIGRDGDLWPAYSLNTTKDSQTPHKAHPIWKWQLGGSAIPLPPSHKFRKFNS</sequence>
<dbReference type="EMBL" id="AB234866">
    <property type="protein sequence ID" value="BAE93016.1"/>
    <property type="molecule type" value="mRNA"/>
</dbReference>
<dbReference type="EMBL" id="AK131456">
    <property type="protein sequence ID" value="BAD18601.1"/>
    <property type="molecule type" value="mRNA"/>
</dbReference>
<dbReference type="EMBL" id="AL358780">
    <property type="status" value="NOT_ANNOTATED_CDS"/>
    <property type="molecule type" value="Genomic_DNA"/>
</dbReference>
<dbReference type="EMBL" id="AL834446">
    <property type="protein sequence ID" value="CAD39106.1"/>
    <property type="molecule type" value="mRNA"/>
</dbReference>
<dbReference type="CCDS" id="CCDS44363.1">
    <molecule id="Q1XH10-1"/>
</dbReference>
<dbReference type="RefSeq" id="NP_997254.3">
    <molecule id="Q1XH10-1"/>
    <property type="nucleotide sequence ID" value="NM_207371.4"/>
</dbReference>
<dbReference type="RefSeq" id="XP_005252507.1">
    <property type="nucleotide sequence ID" value="XM_005252450.3"/>
</dbReference>
<dbReference type="RefSeq" id="XP_011517782.1">
    <property type="nucleotide sequence ID" value="XM_011519480.2"/>
</dbReference>
<dbReference type="RefSeq" id="XP_016871714.1">
    <property type="nucleotide sequence ID" value="XM_017016225.1"/>
</dbReference>
<dbReference type="RefSeq" id="XP_016871715.1">
    <property type="nucleotide sequence ID" value="XM_017016226.1"/>
</dbReference>
<dbReference type="RefSeq" id="XP_047281160.1">
    <molecule id="Q1XH10-1"/>
    <property type="nucleotide sequence ID" value="XM_047425204.1"/>
</dbReference>
<dbReference type="RefSeq" id="XP_047281161.1">
    <molecule id="Q1XH10-1"/>
    <property type="nucleotide sequence ID" value="XM_047425205.1"/>
</dbReference>
<dbReference type="SMR" id="Q1XH10"/>
<dbReference type="BioGRID" id="132378">
    <property type="interactions" value="18"/>
</dbReference>
<dbReference type="FunCoup" id="Q1XH10">
    <property type="interactions" value="382"/>
</dbReference>
<dbReference type="IntAct" id="Q1XH10">
    <property type="interactions" value="10"/>
</dbReference>
<dbReference type="STRING" id="9606.ENSP00000410041"/>
<dbReference type="iPTMnet" id="Q1XH10"/>
<dbReference type="PhosphoSitePlus" id="Q1XH10"/>
<dbReference type="BioMuta" id="SKIDA1"/>
<dbReference type="DMDM" id="121940921"/>
<dbReference type="jPOST" id="Q1XH10"/>
<dbReference type="MassIVE" id="Q1XH10"/>
<dbReference type="PaxDb" id="9606-ENSP00000410041"/>
<dbReference type="PeptideAtlas" id="Q1XH10"/>
<dbReference type="ProteomicsDB" id="19097"/>
<dbReference type="ProteomicsDB" id="27525"/>
<dbReference type="ProteomicsDB" id="61253"/>
<dbReference type="Antibodypedia" id="50910">
    <property type="antibodies" value="65 antibodies from 12 providers"/>
</dbReference>
<dbReference type="DNASU" id="387640"/>
<dbReference type="Ensembl" id="ENST00000444772.3">
    <molecule id="Q1XH10-2"/>
    <property type="protein sequence ID" value="ENSP00000442432.1"/>
    <property type="gene ID" value="ENSG00000180592.17"/>
</dbReference>
<dbReference type="Ensembl" id="ENST00000449193.7">
    <molecule id="Q1XH10-1"/>
    <property type="protein sequence ID" value="ENSP00000410041.2"/>
    <property type="gene ID" value="ENSG00000180592.17"/>
</dbReference>
<dbReference type="GeneID" id="387640"/>
<dbReference type="KEGG" id="hsa:387640"/>
<dbReference type="MANE-Select" id="ENST00000449193.7">
    <property type="protein sequence ID" value="ENSP00000410041.2"/>
    <property type="RefSeq nucleotide sequence ID" value="NM_207371.4"/>
    <property type="RefSeq protein sequence ID" value="NP_997254.3"/>
</dbReference>
<dbReference type="AGR" id="HGNC:32697"/>
<dbReference type="CTD" id="387640"/>
<dbReference type="DisGeNET" id="387640"/>
<dbReference type="GeneCards" id="SKIDA1"/>
<dbReference type="HGNC" id="HGNC:32697">
    <property type="gene designation" value="SKIDA1"/>
</dbReference>
<dbReference type="HPA" id="ENSG00000180592">
    <property type="expression patterns" value="Low tissue specificity"/>
</dbReference>
<dbReference type="neXtProt" id="NX_Q1XH10"/>
<dbReference type="OpenTargets" id="ENSG00000180592"/>
<dbReference type="PharmGKB" id="PA162377645"/>
<dbReference type="VEuPathDB" id="HostDB:ENSG00000180592"/>
<dbReference type="eggNOG" id="KOG3915">
    <property type="taxonomic scope" value="Eukaryota"/>
</dbReference>
<dbReference type="GeneTree" id="ENSGT00940000153451"/>
<dbReference type="InParanoid" id="Q1XH10"/>
<dbReference type="OMA" id="PVWKWQL"/>
<dbReference type="OrthoDB" id="10014624at2759"/>
<dbReference type="PAN-GO" id="Q1XH10">
    <property type="GO annotations" value="0 GO annotations based on evolutionary models"/>
</dbReference>
<dbReference type="PhylomeDB" id="Q1XH10"/>
<dbReference type="TreeFam" id="TF332913"/>
<dbReference type="PathwayCommons" id="Q1XH10"/>
<dbReference type="SignaLink" id="Q1XH10"/>
<dbReference type="BioGRID-ORCS" id="387640">
    <property type="hits" value="11 hits in 1150 CRISPR screens"/>
</dbReference>
<dbReference type="ChiTaRS" id="SKIDA1">
    <property type="organism name" value="human"/>
</dbReference>
<dbReference type="GenomeRNAi" id="387640"/>
<dbReference type="Pharos" id="Q1XH10">
    <property type="development level" value="Tdark"/>
</dbReference>
<dbReference type="PRO" id="PR:Q1XH10"/>
<dbReference type="Proteomes" id="UP000005640">
    <property type="component" value="Chromosome 10"/>
</dbReference>
<dbReference type="RNAct" id="Q1XH10">
    <property type="molecule type" value="protein"/>
</dbReference>
<dbReference type="Bgee" id="ENSG00000180592">
    <property type="expression patterns" value="Expressed in endothelial cell and 108 other cell types or tissues"/>
</dbReference>
<dbReference type="GO" id="GO:0003700">
    <property type="term" value="F:DNA-binding transcription factor activity"/>
    <property type="evidence" value="ECO:0000303"/>
    <property type="project" value="ARUK-UCL"/>
</dbReference>
<dbReference type="GO" id="GO:0006357">
    <property type="term" value="P:regulation of transcription by RNA polymerase II"/>
    <property type="evidence" value="ECO:0000303"/>
    <property type="project" value="ARUK-UCL"/>
</dbReference>
<dbReference type="CDD" id="cd21082">
    <property type="entry name" value="DHD_SKIDA1"/>
    <property type="match status" value="1"/>
</dbReference>
<dbReference type="Gene3D" id="3.10.260.20">
    <property type="entry name" value="Ski"/>
    <property type="match status" value="1"/>
</dbReference>
<dbReference type="InterPro" id="IPR009061">
    <property type="entry name" value="DNA-bd_dom_put_sf"/>
</dbReference>
<dbReference type="InterPro" id="IPR052119">
    <property type="entry name" value="ElonginBC-PRC2_ViralRestrict"/>
</dbReference>
<dbReference type="InterPro" id="IPR027971">
    <property type="entry name" value="EPOP"/>
</dbReference>
<dbReference type="InterPro" id="IPR003380">
    <property type="entry name" value="SKI/SNO/DAC"/>
</dbReference>
<dbReference type="InterPro" id="IPR037000">
    <property type="entry name" value="Ski_DNA-bd_sf"/>
</dbReference>
<dbReference type="PANTHER" id="PTHR23187">
    <property type="entry name" value="FLJ44216 PROTEIN-RELATED"/>
    <property type="match status" value="1"/>
</dbReference>
<dbReference type="PANTHER" id="PTHR23187:SF2">
    <property type="entry name" value="SKI_DACH DOMAIN-CONTAINING PROTEIN 1"/>
    <property type="match status" value="1"/>
</dbReference>
<dbReference type="Pfam" id="PF15223">
    <property type="entry name" value="EPOP"/>
    <property type="match status" value="1"/>
</dbReference>
<dbReference type="Pfam" id="PF02437">
    <property type="entry name" value="Ski_Sno_DHD"/>
    <property type="match status" value="1"/>
</dbReference>
<dbReference type="SUPFAM" id="SSF46955">
    <property type="entry name" value="Putative DNA-binding domain"/>
    <property type="match status" value="1"/>
</dbReference>
<accession>Q1XH10</accession>
<accession>B1ANA5</accession>
<accession>E9PAX1</accession>
<accession>F5H7M0</accession>
<accession>Q6ZMX4</accession>
<accession>Q8N3C3</accession>
<proteinExistence type="evidence at protein level"/>
<feature type="chain" id="PRO_0000328529" description="SKI/DACH domain-containing protein 1">
    <location>
        <begin position="1"/>
        <end position="908"/>
    </location>
</feature>
<feature type="region of interest" description="Disordered" evidence="1">
    <location>
        <begin position="337"/>
        <end position="461"/>
    </location>
</feature>
<feature type="region of interest" description="Disordered" evidence="1">
    <location>
        <begin position="744"/>
        <end position="763"/>
    </location>
</feature>
<feature type="region of interest" description="Disordered" evidence="1">
    <location>
        <begin position="792"/>
        <end position="818"/>
    </location>
</feature>
<feature type="compositionally biased region" description="Basic residues" evidence="1">
    <location>
        <begin position="337"/>
        <end position="353"/>
    </location>
</feature>
<feature type="compositionally biased region" description="Low complexity" evidence="1">
    <location>
        <begin position="370"/>
        <end position="389"/>
    </location>
</feature>
<feature type="compositionally biased region" description="Low complexity" evidence="1">
    <location>
        <begin position="396"/>
        <end position="410"/>
    </location>
</feature>
<feature type="compositionally biased region" description="Acidic residues" evidence="1">
    <location>
        <begin position="411"/>
        <end position="429"/>
    </location>
</feature>
<feature type="compositionally biased region" description="Low complexity" evidence="1">
    <location>
        <begin position="449"/>
        <end position="461"/>
    </location>
</feature>
<feature type="compositionally biased region" description="Polar residues" evidence="1">
    <location>
        <begin position="746"/>
        <end position="761"/>
    </location>
</feature>
<feature type="cross-link" description="Glycyl lysine isopeptide (Lys-Gly) (interchain with G-Cter in SUMO2)" evidence="3">
    <location>
        <position position="688"/>
    </location>
</feature>
<feature type="splice variant" id="VSP_059383" description="In isoform 2.">
    <location>
        <begin position="240"/>
        <end position="318"/>
    </location>
</feature>
<feature type="sequence conflict" description="In Ref. 2; BAD18601." evidence="2" ref="2">
    <location>
        <begin position="229"/>
        <end position="239"/>
    </location>
</feature>
<feature type="sequence conflict" description="In Ref. 1; BAE93016." evidence="2" ref="1">
    <location>
        <begin position="238"/>
        <end position="239"/>
    </location>
</feature>
<feature type="sequence conflict" description="In Ref. 2; BAD18601 and 4; CAD39106." evidence="2" ref="2 4">
    <original>E</original>
    <variation>EEE</variation>
    <location>
        <position position="428"/>
    </location>
</feature>
<feature type="sequence conflict" description="In Ref. 2; BAD18601." evidence="2" ref="2">
    <original>F</original>
    <variation>K</variation>
    <location>
        <position position="850"/>
    </location>
</feature>
<comment type="alternative products">
    <event type="alternative initiation"/>
    <isoform>
        <id>Q1XH10-1</id>
        <name>1</name>
        <sequence type="displayed"/>
    </isoform>
    <isoform>
        <id>Q1XH10-2</id>
        <name>2</name>
        <sequence type="described" ref="VSP_059383"/>
    </isoform>
</comment>
<comment type="polymorphism">
    <text evidence="2">The poly-Ala region of SKIDA1 is highly polymorphic and the number of Ala can vary.</text>
</comment>
<comment type="similarity">
    <text evidence="2">Belongs to the DACH/dachshund family.</text>
</comment>
<evidence type="ECO:0000256" key="1">
    <source>
        <dbReference type="SAM" id="MobiDB-lite"/>
    </source>
</evidence>
<evidence type="ECO:0000305" key="2"/>
<evidence type="ECO:0007744" key="3">
    <source>
    </source>
</evidence>
<organism>
    <name type="scientific">Homo sapiens</name>
    <name type="common">Human</name>
    <dbReference type="NCBI Taxonomy" id="9606"/>
    <lineage>
        <taxon>Eukaryota</taxon>
        <taxon>Metazoa</taxon>
        <taxon>Chordata</taxon>
        <taxon>Craniata</taxon>
        <taxon>Vertebrata</taxon>
        <taxon>Euteleostomi</taxon>
        <taxon>Mammalia</taxon>
        <taxon>Eutheria</taxon>
        <taxon>Euarchontoglires</taxon>
        <taxon>Primates</taxon>
        <taxon>Haplorrhini</taxon>
        <taxon>Catarrhini</taxon>
        <taxon>Hominidae</taxon>
        <taxon>Homo</taxon>
    </lineage>
</organism>
<gene>
    <name type="primary">SKIDA1</name>
    <name type="synonym">C10orf140</name>
    <name type="synonym">DLN1</name>
</gene>
<keyword id="KW-0024">Alternative initiation</keyword>
<keyword id="KW-1017">Isopeptide bond</keyword>
<keyword id="KW-1267">Proteomics identification</keyword>
<keyword id="KW-1185">Reference proteome</keyword>
<keyword id="KW-0832">Ubl conjugation</keyword>
<name>SKDA1_HUMAN</name>
<reference key="1">
    <citation type="submission" date="2005-09" db="EMBL/GenBank/DDBJ databases">
        <title>Cloning of a full-length human DLN-1 gene.</title>
        <authorList>
            <person name="Takenobu H."/>
            <person name="Ohira M."/>
            <person name="Nakamura Y."/>
            <person name="Hirata T."/>
            <person name="Nakagawara A."/>
        </authorList>
    </citation>
    <scope>NUCLEOTIDE SEQUENCE [MRNA] (ISOFORM 2)</scope>
    <source>
        <tissue>Neuroblastoma</tissue>
    </source>
</reference>
<reference key="2">
    <citation type="journal article" date="2004" name="Nat. Genet.">
        <title>Complete sequencing and characterization of 21,243 full-length human cDNAs.</title>
        <authorList>
            <person name="Ota T."/>
            <person name="Suzuki Y."/>
            <person name="Nishikawa T."/>
            <person name="Otsuki T."/>
            <person name="Sugiyama T."/>
            <person name="Irie R."/>
            <person name="Wakamatsu A."/>
            <person name="Hayashi K."/>
            <person name="Sato H."/>
            <person name="Nagai K."/>
            <person name="Kimura K."/>
            <person name="Makita H."/>
            <person name="Sekine M."/>
            <person name="Obayashi M."/>
            <person name="Nishi T."/>
            <person name="Shibahara T."/>
            <person name="Tanaka T."/>
            <person name="Ishii S."/>
            <person name="Yamamoto J."/>
            <person name="Saito K."/>
            <person name="Kawai Y."/>
            <person name="Isono Y."/>
            <person name="Nakamura Y."/>
            <person name="Nagahari K."/>
            <person name="Murakami K."/>
            <person name="Yasuda T."/>
            <person name="Iwayanagi T."/>
            <person name="Wagatsuma M."/>
            <person name="Shiratori A."/>
            <person name="Sudo H."/>
            <person name="Hosoiri T."/>
            <person name="Kaku Y."/>
            <person name="Kodaira H."/>
            <person name="Kondo H."/>
            <person name="Sugawara M."/>
            <person name="Takahashi M."/>
            <person name="Kanda K."/>
            <person name="Yokoi T."/>
            <person name="Furuya T."/>
            <person name="Kikkawa E."/>
            <person name="Omura Y."/>
            <person name="Abe K."/>
            <person name="Kamihara K."/>
            <person name="Katsuta N."/>
            <person name="Sato K."/>
            <person name="Tanikawa M."/>
            <person name="Yamazaki M."/>
            <person name="Ninomiya K."/>
            <person name="Ishibashi T."/>
            <person name="Yamashita H."/>
            <person name="Murakawa K."/>
            <person name="Fujimori K."/>
            <person name="Tanai H."/>
            <person name="Kimata M."/>
            <person name="Watanabe M."/>
            <person name="Hiraoka S."/>
            <person name="Chiba Y."/>
            <person name="Ishida S."/>
            <person name="Ono Y."/>
            <person name="Takiguchi S."/>
            <person name="Watanabe S."/>
            <person name="Yosida M."/>
            <person name="Hotuta T."/>
            <person name="Kusano J."/>
            <person name="Kanehori K."/>
            <person name="Takahashi-Fujii A."/>
            <person name="Hara H."/>
            <person name="Tanase T.-O."/>
            <person name="Nomura Y."/>
            <person name="Togiya S."/>
            <person name="Komai F."/>
            <person name="Hara R."/>
            <person name="Takeuchi K."/>
            <person name="Arita M."/>
            <person name="Imose N."/>
            <person name="Musashino K."/>
            <person name="Yuuki H."/>
            <person name="Oshima A."/>
            <person name="Sasaki N."/>
            <person name="Aotsuka S."/>
            <person name="Yoshikawa Y."/>
            <person name="Matsunawa H."/>
            <person name="Ichihara T."/>
            <person name="Shiohata N."/>
            <person name="Sano S."/>
            <person name="Moriya S."/>
            <person name="Momiyama H."/>
            <person name="Satoh N."/>
            <person name="Takami S."/>
            <person name="Terashima Y."/>
            <person name="Suzuki O."/>
            <person name="Nakagawa S."/>
            <person name="Senoh A."/>
            <person name="Mizoguchi H."/>
            <person name="Goto Y."/>
            <person name="Shimizu F."/>
            <person name="Wakebe H."/>
            <person name="Hishigaki H."/>
            <person name="Watanabe T."/>
            <person name="Sugiyama A."/>
            <person name="Takemoto M."/>
            <person name="Kawakami B."/>
            <person name="Yamazaki M."/>
            <person name="Watanabe K."/>
            <person name="Kumagai A."/>
            <person name="Itakura S."/>
            <person name="Fukuzumi Y."/>
            <person name="Fujimori Y."/>
            <person name="Komiyama M."/>
            <person name="Tashiro H."/>
            <person name="Tanigami A."/>
            <person name="Fujiwara T."/>
            <person name="Ono T."/>
            <person name="Yamada K."/>
            <person name="Fujii Y."/>
            <person name="Ozaki K."/>
            <person name="Hirao M."/>
            <person name="Ohmori Y."/>
            <person name="Kawabata A."/>
            <person name="Hikiji T."/>
            <person name="Kobatake N."/>
            <person name="Inagaki H."/>
            <person name="Ikema Y."/>
            <person name="Okamoto S."/>
            <person name="Okitani R."/>
            <person name="Kawakami T."/>
            <person name="Noguchi S."/>
            <person name="Itoh T."/>
            <person name="Shigeta K."/>
            <person name="Senba T."/>
            <person name="Matsumura K."/>
            <person name="Nakajima Y."/>
            <person name="Mizuno T."/>
            <person name="Morinaga M."/>
            <person name="Sasaki M."/>
            <person name="Togashi T."/>
            <person name="Oyama M."/>
            <person name="Hata H."/>
            <person name="Watanabe M."/>
            <person name="Komatsu T."/>
            <person name="Mizushima-Sugano J."/>
            <person name="Satoh T."/>
            <person name="Shirai Y."/>
            <person name="Takahashi Y."/>
            <person name="Nakagawa K."/>
            <person name="Okumura K."/>
            <person name="Nagase T."/>
            <person name="Nomura N."/>
            <person name="Kikuchi H."/>
            <person name="Masuho Y."/>
            <person name="Yamashita R."/>
            <person name="Nakai K."/>
            <person name="Yada T."/>
            <person name="Nakamura Y."/>
            <person name="Ohara O."/>
            <person name="Isogai T."/>
            <person name="Sugano S."/>
        </authorList>
    </citation>
    <scope>NUCLEOTIDE SEQUENCE [LARGE SCALE MRNA] (ISOFORM 2)</scope>
    <source>
        <tissue>Testis</tissue>
    </source>
</reference>
<reference key="3">
    <citation type="journal article" date="2004" name="Nature">
        <title>The DNA sequence and comparative analysis of human chromosome 10.</title>
        <authorList>
            <person name="Deloukas P."/>
            <person name="Earthrowl M.E."/>
            <person name="Grafham D.V."/>
            <person name="Rubenfield M."/>
            <person name="French L."/>
            <person name="Steward C.A."/>
            <person name="Sims S.K."/>
            <person name="Jones M.C."/>
            <person name="Searle S."/>
            <person name="Scott C."/>
            <person name="Howe K."/>
            <person name="Hunt S.E."/>
            <person name="Andrews T.D."/>
            <person name="Gilbert J.G.R."/>
            <person name="Swarbreck D."/>
            <person name="Ashurst J.L."/>
            <person name="Taylor A."/>
            <person name="Battles J."/>
            <person name="Bird C.P."/>
            <person name="Ainscough R."/>
            <person name="Almeida J.P."/>
            <person name="Ashwell R.I.S."/>
            <person name="Ambrose K.D."/>
            <person name="Babbage A.K."/>
            <person name="Bagguley C.L."/>
            <person name="Bailey J."/>
            <person name="Banerjee R."/>
            <person name="Bates K."/>
            <person name="Beasley H."/>
            <person name="Bray-Allen S."/>
            <person name="Brown A.J."/>
            <person name="Brown J.Y."/>
            <person name="Burford D.C."/>
            <person name="Burrill W."/>
            <person name="Burton J."/>
            <person name="Cahill P."/>
            <person name="Camire D."/>
            <person name="Carter N.P."/>
            <person name="Chapman J.C."/>
            <person name="Clark S.Y."/>
            <person name="Clarke G."/>
            <person name="Clee C.M."/>
            <person name="Clegg S."/>
            <person name="Corby N."/>
            <person name="Coulson A."/>
            <person name="Dhami P."/>
            <person name="Dutta I."/>
            <person name="Dunn M."/>
            <person name="Faulkner L."/>
            <person name="Frankish A."/>
            <person name="Frankland J.A."/>
            <person name="Garner P."/>
            <person name="Garnett J."/>
            <person name="Gribble S."/>
            <person name="Griffiths C."/>
            <person name="Grocock R."/>
            <person name="Gustafson E."/>
            <person name="Hammond S."/>
            <person name="Harley J.L."/>
            <person name="Hart E."/>
            <person name="Heath P.D."/>
            <person name="Ho T.P."/>
            <person name="Hopkins B."/>
            <person name="Horne J."/>
            <person name="Howden P.J."/>
            <person name="Huckle E."/>
            <person name="Hynds C."/>
            <person name="Johnson C."/>
            <person name="Johnson D."/>
            <person name="Kana A."/>
            <person name="Kay M."/>
            <person name="Kimberley A.M."/>
            <person name="Kershaw J.K."/>
            <person name="Kokkinaki M."/>
            <person name="Laird G.K."/>
            <person name="Lawlor S."/>
            <person name="Lee H.M."/>
            <person name="Leongamornlert D.A."/>
            <person name="Laird G."/>
            <person name="Lloyd C."/>
            <person name="Lloyd D.M."/>
            <person name="Loveland J."/>
            <person name="Lovell J."/>
            <person name="McLaren S."/>
            <person name="McLay K.E."/>
            <person name="McMurray A."/>
            <person name="Mashreghi-Mohammadi M."/>
            <person name="Matthews L."/>
            <person name="Milne S."/>
            <person name="Nickerson T."/>
            <person name="Nguyen M."/>
            <person name="Overton-Larty E."/>
            <person name="Palmer S.A."/>
            <person name="Pearce A.V."/>
            <person name="Peck A.I."/>
            <person name="Pelan S."/>
            <person name="Phillimore B."/>
            <person name="Porter K."/>
            <person name="Rice C.M."/>
            <person name="Rogosin A."/>
            <person name="Ross M.T."/>
            <person name="Sarafidou T."/>
            <person name="Sehra H.K."/>
            <person name="Shownkeen R."/>
            <person name="Skuce C.D."/>
            <person name="Smith M."/>
            <person name="Standring L."/>
            <person name="Sycamore N."/>
            <person name="Tester J."/>
            <person name="Thorpe A."/>
            <person name="Torcasso W."/>
            <person name="Tracey A."/>
            <person name="Tromans A."/>
            <person name="Tsolas J."/>
            <person name="Wall M."/>
            <person name="Walsh J."/>
            <person name="Wang H."/>
            <person name="Weinstock K."/>
            <person name="West A.P."/>
            <person name="Willey D.L."/>
            <person name="Whitehead S.L."/>
            <person name="Wilming L."/>
            <person name="Wray P.W."/>
            <person name="Young L."/>
            <person name="Chen Y."/>
            <person name="Lovering R.C."/>
            <person name="Moschonas N.K."/>
            <person name="Siebert R."/>
            <person name="Fechtel K."/>
            <person name="Bentley D."/>
            <person name="Durbin R.M."/>
            <person name="Hubbard T."/>
            <person name="Doucette-Stamm L."/>
            <person name="Beck S."/>
            <person name="Smith D.R."/>
            <person name="Rogers J."/>
        </authorList>
    </citation>
    <scope>NUCLEOTIDE SEQUENCE [LARGE SCALE GENOMIC DNA]</scope>
</reference>
<reference key="4">
    <citation type="journal article" date="2007" name="BMC Genomics">
        <title>The full-ORF clone resource of the German cDNA consortium.</title>
        <authorList>
            <person name="Bechtel S."/>
            <person name="Rosenfelder H."/>
            <person name="Duda A."/>
            <person name="Schmidt C.P."/>
            <person name="Ernst U."/>
            <person name="Wellenreuther R."/>
            <person name="Mehrle A."/>
            <person name="Schuster C."/>
            <person name="Bahr A."/>
            <person name="Bloecker H."/>
            <person name="Heubner D."/>
            <person name="Hoerlein A."/>
            <person name="Michel G."/>
            <person name="Wedler H."/>
            <person name="Koehrer K."/>
            <person name="Ottenwaelder B."/>
            <person name="Poustka A."/>
            <person name="Wiemann S."/>
            <person name="Schupp I."/>
        </authorList>
    </citation>
    <scope>NUCLEOTIDE SEQUENCE [LARGE SCALE MRNA] OF 346-908</scope>
    <source>
        <tissue>Amygdala</tissue>
    </source>
</reference>
<reference key="5">
    <citation type="journal article" date="2017" name="Nat. Struct. Mol. Biol.">
        <title>Site-specific mapping of the human SUMO proteome reveals co-modification with phosphorylation.</title>
        <authorList>
            <person name="Hendriks I.A."/>
            <person name="Lyon D."/>
            <person name="Young C."/>
            <person name="Jensen L.J."/>
            <person name="Vertegaal A.C."/>
            <person name="Nielsen M.L."/>
        </authorList>
    </citation>
    <scope>SUMOYLATION [LARGE SCALE ANALYSIS] AT LYS-688</scope>
    <scope>IDENTIFICATION BY MASS SPECTROMETRY [LARGE SCALE ANALYSIS]</scope>
</reference>
<protein>
    <recommendedName>
        <fullName>SKI/DACH domain-containing protein 1</fullName>
    </recommendedName>
    <alternativeName>
        <fullName>Protein DLN-1</fullName>
    </alternativeName>
</protein>